<reference key="1">
    <citation type="journal article" date="1999" name="Nature">
        <title>Sequence and analysis of chromosome 4 of the plant Arabidopsis thaliana.</title>
        <authorList>
            <person name="Mayer K.F.X."/>
            <person name="Schueller C."/>
            <person name="Wambutt R."/>
            <person name="Murphy G."/>
            <person name="Volckaert G."/>
            <person name="Pohl T."/>
            <person name="Duesterhoeft A."/>
            <person name="Stiekema W."/>
            <person name="Entian K.-D."/>
            <person name="Terryn N."/>
            <person name="Harris B."/>
            <person name="Ansorge W."/>
            <person name="Brandt P."/>
            <person name="Grivell L.A."/>
            <person name="Rieger M."/>
            <person name="Weichselgartner M."/>
            <person name="de Simone V."/>
            <person name="Obermaier B."/>
            <person name="Mache R."/>
            <person name="Mueller M."/>
            <person name="Kreis M."/>
            <person name="Delseny M."/>
            <person name="Puigdomenech P."/>
            <person name="Watson M."/>
            <person name="Schmidtheini T."/>
            <person name="Reichert B."/>
            <person name="Portetelle D."/>
            <person name="Perez-Alonso M."/>
            <person name="Boutry M."/>
            <person name="Bancroft I."/>
            <person name="Vos P."/>
            <person name="Hoheisel J."/>
            <person name="Zimmermann W."/>
            <person name="Wedler H."/>
            <person name="Ridley P."/>
            <person name="Langham S.-A."/>
            <person name="McCullagh B."/>
            <person name="Bilham L."/>
            <person name="Robben J."/>
            <person name="van der Schueren J."/>
            <person name="Grymonprez B."/>
            <person name="Chuang Y.-J."/>
            <person name="Vandenbussche F."/>
            <person name="Braeken M."/>
            <person name="Weltjens I."/>
            <person name="Voet M."/>
            <person name="Bastiaens I."/>
            <person name="Aert R."/>
            <person name="Defoor E."/>
            <person name="Weitzenegger T."/>
            <person name="Bothe G."/>
            <person name="Ramsperger U."/>
            <person name="Hilbert H."/>
            <person name="Braun M."/>
            <person name="Holzer E."/>
            <person name="Brandt A."/>
            <person name="Peters S."/>
            <person name="van Staveren M."/>
            <person name="Dirkse W."/>
            <person name="Mooijman P."/>
            <person name="Klein Lankhorst R."/>
            <person name="Rose M."/>
            <person name="Hauf J."/>
            <person name="Koetter P."/>
            <person name="Berneiser S."/>
            <person name="Hempel S."/>
            <person name="Feldpausch M."/>
            <person name="Lamberth S."/>
            <person name="Van den Daele H."/>
            <person name="De Keyser A."/>
            <person name="Buysshaert C."/>
            <person name="Gielen J."/>
            <person name="Villarroel R."/>
            <person name="De Clercq R."/>
            <person name="van Montagu M."/>
            <person name="Rogers J."/>
            <person name="Cronin A."/>
            <person name="Quail M.A."/>
            <person name="Bray-Allen S."/>
            <person name="Clark L."/>
            <person name="Doggett J."/>
            <person name="Hall S."/>
            <person name="Kay M."/>
            <person name="Lennard N."/>
            <person name="McLay K."/>
            <person name="Mayes R."/>
            <person name="Pettett A."/>
            <person name="Rajandream M.A."/>
            <person name="Lyne M."/>
            <person name="Benes V."/>
            <person name="Rechmann S."/>
            <person name="Borkova D."/>
            <person name="Bloecker H."/>
            <person name="Scharfe M."/>
            <person name="Grimm M."/>
            <person name="Loehnert T.-H."/>
            <person name="Dose S."/>
            <person name="de Haan M."/>
            <person name="Maarse A.C."/>
            <person name="Schaefer M."/>
            <person name="Mueller-Auer S."/>
            <person name="Gabel C."/>
            <person name="Fuchs M."/>
            <person name="Fartmann B."/>
            <person name="Granderath K."/>
            <person name="Dauner D."/>
            <person name="Herzl A."/>
            <person name="Neumann S."/>
            <person name="Argiriou A."/>
            <person name="Vitale D."/>
            <person name="Liguori R."/>
            <person name="Piravandi E."/>
            <person name="Massenet O."/>
            <person name="Quigley F."/>
            <person name="Clabauld G."/>
            <person name="Muendlein A."/>
            <person name="Felber R."/>
            <person name="Schnabl S."/>
            <person name="Hiller R."/>
            <person name="Schmidt W."/>
            <person name="Lecharny A."/>
            <person name="Aubourg S."/>
            <person name="Chefdor F."/>
            <person name="Cooke R."/>
            <person name="Berger C."/>
            <person name="Monfort A."/>
            <person name="Casacuberta E."/>
            <person name="Gibbons T."/>
            <person name="Weber N."/>
            <person name="Vandenbol M."/>
            <person name="Bargues M."/>
            <person name="Terol J."/>
            <person name="Torres A."/>
            <person name="Perez-Perez A."/>
            <person name="Purnelle B."/>
            <person name="Bent E."/>
            <person name="Johnson S."/>
            <person name="Tacon D."/>
            <person name="Jesse T."/>
            <person name="Heijnen L."/>
            <person name="Schwarz S."/>
            <person name="Scholler P."/>
            <person name="Heber S."/>
            <person name="Francs P."/>
            <person name="Bielke C."/>
            <person name="Frishman D."/>
            <person name="Haase D."/>
            <person name="Lemcke K."/>
            <person name="Mewes H.-W."/>
            <person name="Stocker S."/>
            <person name="Zaccaria P."/>
            <person name="Bevan M."/>
            <person name="Wilson R.K."/>
            <person name="de la Bastide M."/>
            <person name="Habermann K."/>
            <person name="Parnell L."/>
            <person name="Dedhia N."/>
            <person name="Gnoj L."/>
            <person name="Schutz K."/>
            <person name="Huang E."/>
            <person name="Spiegel L."/>
            <person name="Sekhon M."/>
            <person name="Murray J."/>
            <person name="Sheet P."/>
            <person name="Cordes M."/>
            <person name="Abu-Threideh J."/>
            <person name="Stoneking T."/>
            <person name="Kalicki J."/>
            <person name="Graves T."/>
            <person name="Harmon G."/>
            <person name="Edwards J."/>
            <person name="Latreille P."/>
            <person name="Courtney L."/>
            <person name="Cloud J."/>
            <person name="Abbott A."/>
            <person name="Scott K."/>
            <person name="Johnson D."/>
            <person name="Minx P."/>
            <person name="Bentley D."/>
            <person name="Fulton B."/>
            <person name="Miller N."/>
            <person name="Greco T."/>
            <person name="Kemp K."/>
            <person name="Kramer J."/>
            <person name="Fulton L."/>
            <person name="Mardis E."/>
            <person name="Dante M."/>
            <person name="Pepin K."/>
            <person name="Hillier L.W."/>
            <person name="Nelson J."/>
            <person name="Spieth J."/>
            <person name="Ryan E."/>
            <person name="Andrews S."/>
            <person name="Geisel C."/>
            <person name="Layman D."/>
            <person name="Du H."/>
            <person name="Ali J."/>
            <person name="Berghoff A."/>
            <person name="Jones K."/>
            <person name="Drone K."/>
            <person name="Cotton M."/>
            <person name="Joshu C."/>
            <person name="Antonoiu B."/>
            <person name="Zidanic M."/>
            <person name="Strong C."/>
            <person name="Sun H."/>
            <person name="Lamar B."/>
            <person name="Yordan C."/>
            <person name="Ma P."/>
            <person name="Zhong J."/>
            <person name="Preston R."/>
            <person name="Vil D."/>
            <person name="Shekher M."/>
            <person name="Matero A."/>
            <person name="Shah R."/>
            <person name="Swaby I.K."/>
            <person name="O'Shaughnessy A."/>
            <person name="Rodriguez M."/>
            <person name="Hoffman J."/>
            <person name="Till S."/>
            <person name="Granat S."/>
            <person name="Shohdy N."/>
            <person name="Hasegawa A."/>
            <person name="Hameed A."/>
            <person name="Lodhi M."/>
            <person name="Johnson A."/>
            <person name="Chen E."/>
            <person name="Marra M.A."/>
            <person name="Martienssen R."/>
            <person name="McCombie W.R."/>
        </authorList>
    </citation>
    <scope>NUCLEOTIDE SEQUENCE [LARGE SCALE GENOMIC DNA]</scope>
    <source>
        <strain>cv. Columbia</strain>
    </source>
</reference>
<reference key="2">
    <citation type="journal article" date="2017" name="Plant J.">
        <title>Araport11: a complete reannotation of the Arabidopsis thaliana reference genome.</title>
        <authorList>
            <person name="Cheng C.Y."/>
            <person name="Krishnakumar V."/>
            <person name="Chan A.P."/>
            <person name="Thibaud-Nissen F."/>
            <person name="Schobel S."/>
            <person name="Town C.D."/>
        </authorList>
    </citation>
    <scope>GENOME REANNOTATION</scope>
    <source>
        <strain>cv. Columbia</strain>
    </source>
</reference>
<reference key="3">
    <citation type="journal article" date="2003" name="Science">
        <title>Empirical analysis of transcriptional activity in the Arabidopsis genome.</title>
        <authorList>
            <person name="Yamada K."/>
            <person name="Lim J."/>
            <person name="Dale J.M."/>
            <person name="Chen H."/>
            <person name="Shinn P."/>
            <person name="Palm C.J."/>
            <person name="Southwick A.M."/>
            <person name="Wu H.C."/>
            <person name="Kim C.J."/>
            <person name="Nguyen M."/>
            <person name="Pham P.K."/>
            <person name="Cheuk R.F."/>
            <person name="Karlin-Newmann G."/>
            <person name="Liu S.X."/>
            <person name="Lam B."/>
            <person name="Sakano H."/>
            <person name="Wu T."/>
            <person name="Yu G."/>
            <person name="Miranda M."/>
            <person name="Quach H.L."/>
            <person name="Tripp M."/>
            <person name="Chang C.H."/>
            <person name="Lee J.M."/>
            <person name="Toriumi M.J."/>
            <person name="Chan M.M."/>
            <person name="Tang C.C."/>
            <person name="Onodera C.S."/>
            <person name="Deng J.M."/>
            <person name="Akiyama K."/>
            <person name="Ansari Y."/>
            <person name="Arakawa T."/>
            <person name="Banh J."/>
            <person name="Banno F."/>
            <person name="Bowser L."/>
            <person name="Brooks S.Y."/>
            <person name="Carninci P."/>
            <person name="Chao Q."/>
            <person name="Choy N."/>
            <person name="Enju A."/>
            <person name="Goldsmith A.D."/>
            <person name="Gurjal M."/>
            <person name="Hansen N.F."/>
            <person name="Hayashizaki Y."/>
            <person name="Johnson-Hopson C."/>
            <person name="Hsuan V.W."/>
            <person name="Iida K."/>
            <person name="Karnes M."/>
            <person name="Khan S."/>
            <person name="Koesema E."/>
            <person name="Ishida J."/>
            <person name="Jiang P.X."/>
            <person name="Jones T."/>
            <person name="Kawai J."/>
            <person name="Kamiya A."/>
            <person name="Meyers C."/>
            <person name="Nakajima M."/>
            <person name="Narusaka M."/>
            <person name="Seki M."/>
            <person name="Sakurai T."/>
            <person name="Satou M."/>
            <person name="Tamse R."/>
            <person name="Vaysberg M."/>
            <person name="Wallender E.K."/>
            <person name="Wong C."/>
            <person name="Yamamura Y."/>
            <person name="Yuan S."/>
            <person name="Shinozaki K."/>
            <person name="Davis R.W."/>
            <person name="Theologis A."/>
            <person name="Ecker J.R."/>
        </authorList>
    </citation>
    <scope>NUCLEOTIDE SEQUENCE [LARGE SCALE MRNA]</scope>
    <source>
        <strain>cv. Columbia</strain>
    </source>
</reference>
<reference key="4">
    <citation type="submission" date="2004-10" db="EMBL/GenBank/DDBJ databases">
        <title>Arabidopsis ORF clones.</title>
        <authorList>
            <person name="Shinn P."/>
            <person name="Chen H."/>
            <person name="Cheuk R."/>
            <person name="Kim C.J."/>
            <person name="Ecker J.R."/>
        </authorList>
    </citation>
    <scope>NUCLEOTIDE SEQUENCE [LARGE SCALE MRNA]</scope>
</reference>
<reference key="5">
    <citation type="journal article" date="2007" name="Plant J.">
        <title>Arabidopsis ESK1 encodes a novel regulator of freezing tolerance.</title>
        <authorList>
            <person name="Xin Z."/>
            <person name="Mandaokar A."/>
            <person name="Chen J."/>
            <person name="Last R.L."/>
            <person name="Browse J."/>
        </authorList>
    </citation>
    <scope>GENE FAMILY</scope>
    <source>
        <strain>cv. Columbia</strain>
    </source>
</reference>
<reference key="6">
    <citation type="journal article" date="2010" name="Plant Physiol.">
        <title>TRICHOME BIREFRINGENCE and its homolog AT5G01360 encode plant-specific DUF231 proteins required for cellulose biosynthesis in Arabidopsis.</title>
        <authorList>
            <person name="Bischoff V."/>
            <person name="Nita S."/>
            <person name="Neumetzler L."/>
            <person name="Schindelasch D."/>
            <person name="Urbain A."/>
            <person name="Eshed R."/>
            <person name="Persson S."/>
            <person name="Delmer D."/>
            <person name="Scheible W.R."/>
        </authorList>
    </citation>
    <scope>GENE FAMILY</scope>
    <scope>NOMENCLATURE</scope>
</reference>
<reference key="7">
    <citation type="journal article" date="2011" name="Plant Cell">
        <title>O-acetylation of Arabidopsis hemicellulose xyloglucan requires AXY4 or AXY4L, proteins with a TBL and DUF231 domain.</title>
        <authorList>
            <person name="Gille S."/>
            <person name="de Souza A."/>
            <person name="Xiong G."/>
            <person name="Benz M."/>
            <person name="Cheng K."/>
            <person name="Schultink A."/>
            <person name="Reca I.B."/>
            <person name="Pauly M."/>
        </authorList>
    </citation>
    <scope>FUNCTION</scope>
</reference>
<reference key="8">
    <citation type="journal article" date="2010" name="Plant Signal. Behav.">
        <title>Involvement of TBL/DUF231 proteins into cell wall biology.</title>
        <authorList>
            <person name="Bischoff V."/>
            <person name="Selbig J."/>
            <person name="Scheible W.R."/>
        </authorList>
    </citation>
    <scope>3D-STRUCTURE MODELING</scope>
</reference>
<protein>
    <recommendedName>
        <fullName>Protein trichome birefringence-like 26</fullName>
    </recommendedName>
</protein>
<organism>
    <name type="scientific">Arabidopsis thaliana</name>
    <name type="common">Mouse-ear cress</name>
    <dbReference type="NCBI Taxonomy" id="3702"/>
    <lineage>
        <taxon>Eukaryota</taxon>
        <taxon>Viridiplantae</taxon>
        <taxon>Streptophyta</taxon>
        <taxon>Embryophyta</taxon>
        <taxon>Tracheophyta</taxon>
        <taxon>Spermatophyta</taxon>
        <taxon>Magnoliopsida</taxon>
        <taxon>eudicotyledons</taxon>
        <taxon>Gunneridae</taxon>
        <taxon>Pentapetalae</taxon>
        <taxon>rosids</taxon>
        <taxon>malvids</taxon>
        <taxon>Brassicales</taxon>
        <taxon>Brassicaceae</taxon>
        <taxon>Camelineae</taxon>
        <taxon>Arabidopsis</taxon>
    </lineage>
</organism>
<evidence type="ECO:0000250" key="1">
    <source>
        <dbReference type="UniProtKB" id="Q9FG35"/>
    </source>
</evidence>
<evidence type="ECO:0000255" key="2"/>
<evidence type="ECO:0000269" key="3">
    <source>
    </source>
</evidence>
<evidence type="ECO:0000305" key="4"/>
<evidence type="ECO:0000305" key="5">
    <source>
    </source>
</evidence>
<sequence length="442" mass="50687">MEQQLTLVLLDSPKGAKYVETFEEAASSSSSSSSSSVPSCTDHRHRTFVKFFLYFSLVALAYYFIISSLAVSPIPPTLPQSSPGNVSSAKCDLFTGDWIPDPTGPLYTNVTCRHIQDFQNCLLNGRPDVNYLFWRWKPRDCDLPRFSPSQFLASVKNKWWAFIGDSIARNHVQSLICILSQVEEVEEIYHDKEFRSKIWRFPSHNFTLSVIWSPFLLKSETSSNSDIQLYLDQLDHKWTVQYPKFDYVVISGGKWFLKTTIFHENNVVTGCHYCQGRNNLTDLGYDYSYRKTLNLLRDFVLNSTHKPLVLFRTTTPDHFENGEWNTGGYCNRTMPFKEGQANMKTVDDVMRDVELEVFQKFGKGFGLGSNIRLLDTTGMSLLRPDGHPGPYRHPNPFAGVKNKSNVQNDCLHWCLPGPIDSWNDVMVETTLNRERELYDLTG</sequence>
<name>TBL26_ARATH</name>
<comment type="function">
    <text evidence="1 3">May be involved in the O-acetylation of mannan (PubMed:22086088). May act as a bridging protein that binds pectin and other cell wall polysaccharides. Probably involved in maintaining esterification of pectins (By similarity).</text>
</comment>
<comment type="subcellular location">
    <subcellularLocation>
        <location evidence="4">Membrane</location>
        <topology evidence="4">Single-pass type II membrane protein</topology>
    </subcellularLocation>
</comment>
<comment type="miscellaneous">
    <text evidence="5">Contains 2 motifs that are conserved in esterases, but it is unlikely that this protein belongs to the catalytically active pectin esterases.</text>
</comment>
<comment type="similarity">
    <text evidence="4">Belongs to the PC-esterase family. TBL subfamily.</text>
</comment>
<gene>
    <name type="primary">TBL26</name>
    <name type="ordered locus">At4g01080</name>
    <name type="ORF">F2N1.14</name>
</gene>
<feature type="chain" id="PRO_0000425391" description="Protein trichome birefringence-like 26">
    <location>
        <begin position="1"/>
        <end position="442"/>
    </location>
</feature>
<feature type="transmembrane region" description="Helical; Signal-anchor for type II membrane protein" evidence="2">
    <location>
        <begin position="51"/>
        <end position="71"/>
    </location>
</feature>
<feature type="short sequence motif" description="GDS motif">
    <location>
        <begin position="164"/>
        <end position="166"/>
    </location>
</feature>
<feature type="short sequence motif" description="DCXHWCLPGXXDXWN motif">
    <location>
        <begin position="409"/>
        <end position="423"/>
    </location>
</feature>
<feature type="sequence conflict" description="In Ref. 3; AAO42025." evidence="4" ref="3">
    <original>F</original>
    <variation>L</variation>
    <location>
        <position position="64"/>
    </location>
</feature>
<dbReference type="EMBL" id="AF007269">
    <property type="protein sequence ID" value="AAB61022.1"/>
    <property type="molecule type" value="Genomic_DNA"/>
</dbReference>
<dbReference type="EMBL" id="AL161491">
    <property type="protein sequence ID" value="CAB80917.1"/>
    <property type="molecule type" value="Genomic_DNA"/>
</dbReference>
<dbReference type="EMBL" id="CP002687">
    <property type="protein sequence ID" value="AEE81979.1"/>
    <property type="molecule type" value="Genomic_DNA"/>
</dbReference>
<dbReference type="EMBL" id="BT003985">
    <property type="protein sequence ID" value="AAO42025.1"/>
    <property type="molecule type" value="mRNA"/>
</dbReference>
<dbReference type="EMBL" id="BT015944">
    <property type="protein sequence ID" value="AAV34774.1"/>
    <property type="molecule type" value="mRNA"/>
</dbReference>
<dbReference type="PIR" id="T01731">
    <property type="entry name" value="T01731"/>
</dbReference>
<dbReference type="RefSeq" id="NP_192017.1">
    <property type="nucleotide sequence ID" value="NM_116338.4"/>
</dbReference>
<dbReference type="SMR" id="O04621"/>
<dbReference type="FunCoup" id="O04621">
    <property type="interactions" value="9"/>
</dbReference>
<dbReference type="STRING" id="3702.O04621"/>
<dbReference type="PaxDb" id="3702-AT4G01080.1"/>
<dbReference type="ProteomicsDB" id="234196"/>
<dbReference type="EnsemblPlants" id="AT4G01080.1">
    <property type="protein sequence ID" value="AT4G01080.1"/>
    <property type="gene ID" value="AT4G01080"/>
</dbReference>
<dbReference type="GeneID" id="827902"/>
<dbReference type="Gramene" id="AT4G01080.1">
    <property type="protein sequence ID" value="AT4G01080.1"/>
    <property type="gene ID" value="AT4G01080"/>
</dbReference>
<dbReference type="KEGG" id="ath:AT4G01080"/>
<dbReference type="Araport" id="AT4G01080"/>
<dbReference type="TAIR" id="AT4G01080">
    <property type="gene designation" value="TBL26"/>
</dbReference>
<dbReference type="eggNOG" id="ENOG502QSJI">
    <property type="taxonomic scope" value="Eukaryota"/>
</dbReference>
<dbReference type="HOGENOM" id="CLU_020953_6_4_1"/>
<dbReference type="InParanoid" id="O04621"/>
<dbReference type="OMA" id="HPNPFAG"/>
<dbReference type="PhylomeDB" id="O04621"/>
<dbReference type="PRO" id="PR:O04621"/>
<dbReference type="Proteomes" id="UP000006548">
    <property type="component" value="Chromosome 4"/>
</dbReference>
<dbReference type="ExpressionAtlas" id="O04621">
    <property type="expression patterns" value="baseline and differential"/>
</dbReference>
<dbReference type="GO" id="GO:0016020">
    <property type="term" value="C:membrane"/>
    <property type="evidence" value="ECO:0007669"/>
    <property type="project" value="UniProtKB-SubCell"/>
</dbReference>
<dbReference type="GO" id="GO:0016413">
    <property type="term" value="F:O-acetyltransferase activity"/>
    <property type="evidence" value="ECO:0000314"/>
    <property type="project" value="TAIR"/>
</dbReference>
<dbReference type="InterPro" id="IPR029962">
    <property type="entry name" value="TBL"/>
</dbReference>
<dbReference type="InterPro" id="IPR026057">
    <property type="entry name" value="TBL_C"/>
</dbReference>
<dbReference type="InterPro" id="IPR025846">
    <property type="entry name" value="TBL_N"/>
</dbReference>
<dbReference type="PANTHER" id="PTHR32285:SF181">
    <property type="entry name" value="PROTEIN TRICHOME BIREFRINGENCE-LIKE 26"/>
    <property type="match status" value="1"/>
</dbReference>
<dbReference type="PANTHER" id="PTHR32285">
    <property type="entry name" value="PROTEIN TRICHOME BIREFRINGENCE-LIKE 9-RELATED"/>
    <property type="match status" value="1"/>
</dbReference>
<dbReference type="Pfam" id="PF13839">
    <property type="entry name" value="PC-Esterase"/>
    <property type="match status" value="1"/>
</dbReference>
<dbReference type="Pfam" id="PF14416">
    <property type="entry name" value="PMR5N"/>
    <property type="match status" value="1"/>
</dbReference>
<accession>O04621</accession>
<accession>Q84WC7</accession>
<keyword id="KW-0472">Membrane</keyword>
<keyword id="KW-1185">Reference proteome</keyword>
<keyword id="KW-0735">Signal-anchor</keyword>
<keyword id="KW-0812">Transmembrane</keyword>
<keyword id="KW-1133">Transmembrane helix</keyword>
<proteinExistence type="evidence at transcript level"/>